<gene>
    <name evidence="1" type="primary">mnmE</name>
    <name evidence="1" type="synonym">trmE</name>
    <name type="ordered locus">BDI_2122</name>
</gene>
<feature type="chain" id="PRO_0000345860" description="tRNA modification GTPase MnmE">
    <location>
        <begin position="1"/>
        <end position="461"/>
    </location>
</feature>
<feature type="domain" description="TrmE-type G">
    <location>
        <begin position="221"/>
        <end position="383"/>
    </location>
</feature>
<feature type="binding site" evidence="1">
    <location>
        <position position="20"/>
    </location>
    <ligand>
        <name>(6S)-5-formyl-5,6,7,8-tetrahydrofolate</name>
        <dbReference type="ChEBI" id="CHEBI:57457"/>
    </ligand>
</feature>
<feature type="binding site" evidence="1">
    <location>
        <position position="85"/>
    </location>
    <ligand>
        <name>(6S)-5-formyl-5,6,7,8-tetrahydrofolate</name>
        <dbReference type="ChEBI" id="CHEBI:57457"/>
    </ligand>
</feature>
<feature type="binding site" evidence="1">
    <location>
        <position position="124"/>
    </location>
    <ligand>
        <name>(6S)-5-formyl-5,6,7,8-tetrahydrofolate</name>
        <dbReference type="ChEBI" id="CHEBI:57457"/>
    </ligand>
</feature>
<feature type="binding site" evidence="1">
    <location>
        <begin position="231"/>
        <end position="236"/>
    </location>
    <ligand>
        <name>GTP</name>
        <dbReference type="ChEBI" id="CHEBI:37565"/>
    </ligand>
</feature>
<feature type="binding site" evidence="1">
    <location>
        <position position="231"/>
    </location>
    <ligand>
        <name>K(+)</name>
        <dbReference type="ChEBI" id="CHEBI:29103"/>
    </ligand>
</feature>
<feature type="binding site" evidence="1">
    <location>
        <position position="235"/>
    </location>
    <ligand>
        <name>Mg(2+)</name>
        <dbReference type="ChEBI" id="CHEBI:18420"/>
    </ligand>
</feature>
<feature type="binding site" evidence="1">
    <location>
        <begin position="250"/>
        <end position="256"/>
    </location>
    <ligand>
        <name>GTP</name>
        <dbReference type="ChEBI" id="CHEBI:37565"/>
    </ligand>
</feature>
<feature type="binding site" evidence="1">
    <location>
        <position position="250"/>
    </location>
    <ligand>
        <name>K(+)</name>
        <dbReference type="ChEBI" id="CHEBI:29103"/>
    </ligand>
</feature>
<feature type="binding site" evidence="1">
    <location>
        <position position="252"/>
    </location>
    <ligand>
        <name>K(+)</name>
        <dbReference type="ChEBI" id="CHEBI:29103"/>
    </ligand>
</feature>
<feature type="binding site" evidence="1">
    <location>
        <position position="255"/>
    </location>
    <ligand>
        <name>K(+)</name>
        <dbReference type="ChEBI" id="CHEBI:29103"/>
    </ligand>
</feature>
<feature type="binding site" evidence="1">
    <location>
        <position position="256"/>
    </location>
    <ligand>
        <name>Mg(2+)</name>
        <dbReference type="ChEBI" id="CHEBI:18420"/>
    </ligand>
</feature>
<feature type="binding site" evidence="1">
    <location>
        <begin position="275"/>
        <end position="278"/>
    </location>
    <ligand>
        <name>GTP</name>
        <dbReference type="ChEBI" id="CHEBI:37565"/>
    </ligand>
</feature>
<feature type="binding site" evidence="1">
    <location>
        <position position="461"/>
    </location>
    <ligand>
        <name>(6S)-5-formyl-5,6,7,8-tetrahydrofolate</name>
        <dbReference type="ChEBI" id="CHEBI:57457"/>
    </ligand>
</feature>
<name>MNME_PARD8</name>
<comment type="function">
    <text evidence="1">Exhibits a very high intrinsic GTPase hydrolysis rate. Involved in the addition of a carboxymethylaminomethyl (cmnm) group at the wobble position (U34) of certain tRNAs, forming tRNA-cmnm(5)s(2)U34.</text>
</comment>
<comment type="cofactor">
    <cofactor evidence="1">
        <name>K(+)</name>
        <dbReference type="ChEBI" id="CHEBI:29103"/>
    </cofactor>
    <text evidence="1">Binds 1 potassium ion per subunit.</text>
</comment>
<comment type="subunit">
    <text evidence="1">Homodimer. Heterotetramer of two MnmE and two MnmG subunits.</text>
</comment>
<comment type="subcellular location">
    <subcellularLocation>
        <location evidence="1">Cytoplasm</location>
    </subcellularLocation>
</comment>
<comment type="similarity">
    <text evidence="1">Belongs to the TRAFAC class TrmE-Era-EngA-EngB-Septin-like GTPase superfamily. TrmE GTPase family.</text>
</comment>
<keyword id="KW-0963">Cytoplasm</keyword>
<keyword id="KW-0342">GTP-binding</keyword>
<keyword id="KW-0378">Hydrolase</keyword>
<keyword id="KW-0460">Magnesium</keyword>
<keyword id="KW-0479">Metal-binding</keyword>
<keyword id="KW-0547">Nucleotide-binding</keyword>
<keyword id="KW-0630">Potassium</keyword>
<keyword id="KW-1185">Reference proteome</keyword>
<keyword id="KW-0819">tRNA processing</keyword>
<sequence length="461" mass="50636">MSTICAISTAPGVGGIAVIRVSGPDTFKICDRIFRPKKAGKSLSTQKAYTLTYGSIVGNNDETIDEVIAAVFRAPHSFTGEDTVEITCHGSTYIQQQILQSLISSGCRIAQPGEYTQRAFMNGKMDLSQAEAVADLIASTSAGQHRLALSQMRGGFSRELAELRNQLLHFTSLMELELDFSDHEELEFADRSELRTLADHIEQVISKLAQSFSVGNAIKNGIPVAIIGETNAGKSTLLNALLNEDKAIVSDIHGTTRDVIEDTININGQLFRFIDTAGIRETSDAIEALGIERSFKALDQAQIVILMYDLTRDLKDFEAFYQEIAPRLTNKSVILAMNKCDVLPTSSLPTFSFPTEGWHQIAISAKSKLHIAELQQLLTEVSSIPTLHQSDIIVTNVRHFEALTHALEAIHRVQEGLNSSLSGDFISQDLRECIFHLSDIVGEVTTDQVLGNIFRHFCIGK</sequence>
<accession>A6LDT9</accession>
<proteinExistence type="inferred from homology"/>
<dbReference type="EC" id="3.6.-.-" evidence="1"/>
<dbReference type="EMBL" id="CP000140">
    <property type="protein sequence ID" value="ABR43853.1"/>
    <property type="molecule type" value="Genomic_DNA"/>
</dbReference>
<dbReference type="RefSeq" id="WP_011966701.1">
    <property type="nucleotide sequence ID" value="NC_009615.1"/>
</dbReference>
<dbReference type="SMR" id="A6LDT9"/>
<dbReference type="STRING" id="435591.BDI_2122"/>
<dbReference type="PaxDb" id="435591-BDI_2122"/>
<dbReference type="KEGG" id="pdi:BDI_2122"/>
<dbReference type="eggNOG" id="COG0486">
    <property type="taxonomic scope" value="Bacteria"/>
</dbReference>
<dbReference type="HOGENOM" id="CLU_019624_4_1_10"/>
<dbReference type="BioCyc" id="PDIS435591:G1G5A-2176-MONOMER"/>
<dbReference type="Proteomes" id="UP000000566">
    <property type="component" value="Chromosome"/>
</dbReference>
<dbReference type="GO" id="GO:0005829">
    <property type="term" value="C:cytosol"/>
    <property type="evidence" value="ECO:0007669"/>
    <property type="project" value="TreeGrafter"/>
</dbReference>
<dbReference type="GO" id="GO:0005525">
    <property type="term" value="F:GTP binding"/>
    <property type="evidence" value="ECO:0007669"/>
    <property type="project" value="UniProtKB-UniRule"/>
</dbReference>
<dbReference type="GO" id="GO:0003924">
    <property type="term" value="F:GTPase activity"/>
    <property type="evidence" value="ECO:0007669"/>
    <property type="project" value="UniProtKB-UniRule"/>
</dbReference>
<dbReference type="GO" id="GO:0046872">
    <property type="term" value="F:metal ion binding"/>
    <property type="evidence" value="ECO:0007669"/>
    <property type="project" value="UniProtKB-KW"/>
</dbReference>
<dbReference type="GO" id="GO:0030488">
    <property type="term" value="P:tRNA methylation"/>
    <property type="evidence" value="ECO:0007669"/>
    <property type="project" value="TreeGrafter"/>
</dbReference>
<dbReference type="GO" id="GO:0002098">
    <property type="term" value="P:tRNA wobble uridine modification"/>
    <property type="evidence" value="ECO:0007669"/>
    <property type="project" value="TreeGrafter"/>
</dbReference>
<dbReference type="CDD" id="cd04164">
    <property type="entry name" value="trmE"/>
    <property type="match status" value="1"/>
</dbReference>
<dbReference type="CDD" id="cd14858">
    <property type="entry name" value="TrmE_N"/>
    <property type="match status" value="1"/>
</dbReference>
<dbReference type="FunFam" id="3.30.1360.120:FF:000003">
    <property type="entry name" value="tRNA modification GTPase MnmE"/>
    <property type="match status" value="1"/>
</dbReference>
<dbReference type="FunFam" id="3.40.50.300:FF:001376">
    <property type="entry name" value="tRNA modification GTPase MnmE"/>
    <property type="match status" value="1"/>
</dbReference>
<dbReference type="Gene3D" id="3.40.50.300">
    <property type="entry name" value="P-loop containing nucleotide triphosphate hydrolases"/>
    <property type="match status" value="1"/>
</dbReference>
<dbReference type="Gene3D" id="3.30.1360.120">
    <property type="entry name" value="Probable tRNA modification gtpase trme, domain 1"/>
    <property type="match status" value="1"/>
</dbReference>
<dbReference type="Gene3D" id="1.20.120.430">
    <property type="entry name" value="tRNA modification GTPase MnmE domain 2"/>
    <property type="match status" value="1"/>
</dbReference>
<dbReference type="HAMAP" id="MF_00379">
    <property type="entry name" value="GTPase_MnmE"/>
    <property type="match status" value="1"/>
</dbReference>
<dbReference type="InterPro" id="IPR031168">
    <property type="entry name" value="G_TrmE"/>
</dbReference>
<dbReference type="InterPro" id="IPR006073">
    <property type="entry name" value="GTP-bd"/>
</dbReference>
<dbReference type="InterPro" id="IPR018948">
    <property type="entry name" value="GTP-bd_TrmE_N"/>
</dbReference>
<dbReference type="InterPro" id="IPR004520">
    <property type="entry name" value="GTPase_MnmE"/>
</dbReference>
<dbReference type="InterPro" id="IPR027368">
    <property type="entry name" value="MnmE_dom2"/>
</dbReference>
<dbReference type="InterPro" id="IPR025867">
    <property type="entry name" value="MnmE_helical"/>
</dbReference>
<dbReference type="InterPro" id="IPR027417">
    <property type="entry name" value="P-loop_NTPase"/>
</dbReference>
<dbReference type="InterPro" id="IPR005225">
    <property type="entry name" value="Small_GTP-bd"/>
</dbReference>
<dbReference type="InterPro" id="IPR027266">
    <property type="entry name" value="TrmE/GcvT_dom1"/>
</dbReference>
<dbReference type="NCBIfam" id="TIGR00450">
    <property type="entry name" value="mnmE_trmE_thdF"/>
    <property type="match status" value="1"/>
</dbReference>
<dbReference type="NCBIfam" id="NF003661">
    <property type="entry name" value="PRK05291.1-3"/>
    <property type="match status" value="1"/>
</dbReference>
<dbReference type="NCBIfam" id="TIGR00231">
    <property type="entry name" value="small_GTP"/>
    <property type="match status" value="1"/>
</dbReference>
<dbReference type="PANTHER" id="PTHR42714">
    <property type="entry name" value="TRNA MODIFICATION GTPASE GTPBP3"/>
    <property type="match status" value="1"/>
</dbReference>
<dbReference type="PANTHER" id="PTHR42714:SF2">
    <property type="entry name" value="TRNA MODIFICATION GTPASE GTPBP3, MITOCHONDRIAL"/>
    <property type="match status" value="1"/>
</dbReference>
<dbReference type="Pfam" id="PF01926">
    <property type="entry name" value="MMR_HSR1"/>
    <property type="match status" value="1"/>
</dbReference>
<dbReference type="Pfam" id="PF12631">
    <property type="entry name" value="MnmE_helical"/>
    <property type="match status" value="1"/>
</dbReference>
<dbReference type="Pfam" id="PF10396">
    <property type="entry name" value="TrmE_N"/>
    <property type="match status" value="1"/>
</dbReference>
<dbReference type="SUPFAM" id="SSF52540">
    <property type="entry name" value="P-loop containing nucleoside triphosphate hydrolases"/>
    <property type="match status" value="1"/>
</dbReference>
<dbReference type="PROSITE" id="PS51709">
    <property type="entry name" value="G_TRME"/>
    <property type="match status" value="1"/>
</dbReference>
<evidence type="ECO:0000255" key="1">
    <source>
        <dbReference type="HAMAP-Rule" id="MF_00379"/>
    </source>
</evidence>
<reference key="1">
    <citation type="journal article" date="2007" name="PLoS Biol.">
        <title>Evolution of symbiotic bacteria in the distal human intestine.</title>
        <authorList>
            <person name="Xu J."/>
            <person name="Mahowald M.A."/>
            <person name="Ley R.E."/>
            <person name="Lozupone C.A."/>
            <person name="Hamady M."/>
            <person name="Martens E.C."/>
            <person name="Henrissat B."/>
            <person name="Coutinho P.M."/>
            <person name="Minx P."/>
            <person name="Latreille P."/>
            <person name="Cordum H."/>
            <person name="Van Brunt A."/>
            <person name="Kim K."/>
            <person name="Fulton R.S."/>
            <person name="Fulton L.A."/>
            <person name="Clifton S.W."/>
            <person name="Wilson R.K."/>
            <person name="Knight R.D."/>
            <person name="Gordon J.I."/>
        </authorList>
    </citation>
    <scope>NUCLEOTIDE SEQUENCE [LARGE SCALE GENOMIC DNA]</scope>
    <source>
        <strain>ATCC 8503 / DSM 20701 / CIP 104284 / JCM 5825 / NCTC 11152</strain>
    </source>
</reference>
<protein>
    <recommendedName>
        <fullName evidence="1">tRNA modification GTPase MnmE</fullName>
        <ecNumber evidence="1">3.6.-.-</ecNumber>
    </recommendedName>
</protein>
<organism>
    <name type="scientific">Parabacteroides distasonis (strain ATCC 8503 / DSM 20701 / CIP 104284 / JCM 5825 / NCTC 11152)</name>
    <dbReference type="NCBI Taxonomy" id="435591"/>
    <lineage>
        <taxon>Bacteria</taxon>
        <taxon>Pseudomonadati</taxon>
        <taxon>Bacteroidota</taxon>
        <taxon>Bacteroidia</taxon>
        <taxon>Bacteroidales</taxon>
        <taxon>Tannerellaceae</taxon>
        <taxon>Parabacteroides</taxon>
    </lineage>
</organism>